<evidence type="ECO:0000250" key="1">
    <source>
        <dbReference type="UniProtKB" id="O34974"/>
    </source>
</evidence>
<evidence type="ECO:0000269" key="2">
    <source>
    </source>
</evidence>
<evidence type="ECO:0000269" key="3">
    <source>
    </source>
</evidence>
<evidence type="ECO:0000303" key="4">
    <source>
    </source>
</evidence>
<evidence type="ECO:0000303" key="5">
    <source>
    </source>
</evidence>
<evidence type="ECO:0000305" key="6"/>
<evidence type="ECO:0000305" key="7">
    <source>
    </source>
</evidence>
<name>SCMK_BACSU</name>
<comment type="function">
    <text evidence="2 3">Catalyzes the oxidative cleavage of the C-S bond of N-acetyl-S-(2-succino)cysteine, forming oxaloacetate and N-acetylcysteine (NAC) (PubMed:34510734). Is involved in a S-(2-succino)cysteine (2SC) degradation pathway that allows B.subtilis to grow on 2SC as a sole sulfur source, via its metabolization to cysteine (PubMed:29626092). Shows almost no activity on S-succinylglutathione and 2SC (PubMed:34510734).</text>
</comment>
<comment type="catalytic activity">
    <reaction evidence="3 7">
        <text>N-acetyl-S-(2-succino)-L-cysteine + NADH + O2 + H(+) = N-acetyl-L-cysteine + oxaloacetate + NAD(+) + H2O</text>
        <dbReference type="Rhea" id="RHEA:76531"/>
        <dbReference type="ChEBI" id="CHEBI:15377"/>
        <dbReference type="ChEBI" id="CHEBI:15378"/>
        <dbReference type="ChEBI" id="CHEBI:15379"/>
        <dbReference type="ChEBI" id="CHEBI:16452"/>
        <dbReference type="ChEBI" id="CHEBI:57540"/>
        <dbReference type="ChEBI" id="CHEBI:57945"/>
        <dbReference type="ChEBI" id="CHEBI:78236"/>
        <dbReference type="ChEBI" id="CHEBI:144658"/>
    </reaction>
    <physiologicalReaction direction="left-to-right" evidence="2">
        <dbReference type="Rhea" id="RHEA:76532"/>
    </physiologicalReaction>
</comment>
<comment type="cofactor">
    <cofactor evidence="1">
        <name>FMN</name>
        <dbReference type="ChEBI" id="CHEBI:58210"/>
    </cofactor>
</comment>
<comment type="biophysicochemical properties">
    <kinetics>
        <KM evidence="3">92 uM for N-acetyl-S-(2-succino)cysteine</KM>
        <text evidence="3">kcat is 4.4 sec(-1) using E.coli Fre as the flavin reductase partner. The enzyme may work more efficiently in vivo when interacting with its native partner flavin reductase.</text>
    </kinetics>
</comment>
<comment type="pathway">
    <text evidence="7">Amino-acid biosynthesis; L-cysteine biosynthesis.</text>
</comment>
<comment type="subunit">
    <text evidence="3">Homodimer.</text>
</comment>
<comment type="disruption phenotype">
    <text evidence="2">Cells lacking this gene almost lose the ability to grow on 2SC as the sulfur source but are still able to grow on sulfate. Moreover, they show a massive accumulation of N-acetyl-S-(2-succino)cysteine when S2C is added to the medium.</text>
</comment>
<comment type="miscellaneous">
    <text evidence="3">The substrate N-acetyl-S-(2-succino)-L-cysteine arises from the spontaneous Michael addition of cysteine to the citric acid cycle intermediate fumarate.</text>
</comment>
<comment type="similarity">
    <text evidence="6">Belongs to the NtaA/SnaA/DszA monooxygenase family.</text>
</comment>
<sequence>MTSKKKQIKLGVFLAGTGHHVASWRHPDAPSDASMNLDYFKELAKTAERGKLDMLFLADSLSIDSKSHPNVLTRFEPFTLLSALAQVTSKIGLTATASTTYSEPFHIARQFASLDHLSNGRAGWNVVTSSIESTALNFSGEKHLEHHLRYQRAEEFVEIVKGLWDSWEEDAFIRNKETGEFFDKEKMHELNHKGEYFSVRGPLNVSRTPQGQPVIIQAGSSGDGKALAAKTAEVIFTAQNHLESAQEFYQSIKEQAAEFGRDPEKIAIMPGIFPIIADTEEAAQAKYKELQDLIIPSVGLQILQNYLGGIDLSAYPLDGPLPKLDAEASNAVKSRFKLVQEMAERDNMTIRELYKYVAGSRGHHIFVGTPEQLADKMQEWVDTKACDGFNIMPPLLPEGIEVFVDQVVPILQERGVFRKEYEGTTLREHFGLEKPVNRYAK</sequence>
<feature type="chain" id="PRO_0000050017" description="N-acetyl-S-(2-succino)cysteine monooxygenase">
    <location>
        <begin position="1"/>
        <end position="441"/>
    </location>
</feature>
<feature type="binding site" evidence="1">
    <location>
        <position position="59"/>
    </location>
    <ligand>
        <name>FMN</name>
        <dbReference type="ChEBI" id="CHEBI:58210"/>
    </ligand>
</feature>
<feature type="binding site" evidence="1">
    <location>
        <position position="96"/>
    </location>
    <ligand>
        <name>FMN</name>
        <dbReference type="ChEBI" id="CHEBI:58210"/>
    </ligand>
</feature>
<feature type="binding site" evidence="1">
    <location>
        <position position="146"/>
    </location>
    <ligand>
        <name>FMN</name>
        <dbReference type="ChEBI" id="CHEBI:58210"/>
    </ligand>
</feature>
<feature type="binding site" evidence="1">
    <location>
        <position position="150"/>
    </location>
    <ligand>
        <name>FMN</name>
        <dbReference type="ChEBI" id="CHEBI:58210"/>
    </ligand>
</feature>
<feature type="binding site" evidence="1">
    <location>
        <position position="220"/>
    </location>
    <ligand>
        <name>FMN</name>
        <dbReference type="ChEBI" id="CHEBI:58210"/>
    </ligand>
</feature>
<feature type="binding site" evidence="1">
    <location>
        <position position="221"/>
    </location>
    <ligand>
        <name>FMN</name>
        <dbReference type="ChEBI" id="CHEBI:58210"/>
    </ligand>
</feature>
<feature type="mutagenesis site" description="Shows 36% of wild-type catalytic activity." evidence="3">
    <original>H</original>
    <variation>A</variation>
    <location>
        <position position="19"/>
    </location>
</feature>
<feature type="mutagenesis site" description="Loss of catalytic activity." evidence="3">
    <original>R</original>
    <variation>M</variation>
    <location>
        <position position="74"/>
    </location>
</feature>
<feature type="mutagenesis site" description="Shows 10% of wild-type catalytic activity." evidence="3">
    <original>T</original>
    <variation>A</variation>
    <location>
        <position position="96"/>
    </location>
</feature>
<feature type="mutagenesis site" description="Shows 0.9% of wild-type catalytic activity." evidence="3">
    <original>T</original>
    <variation>V</variation>
    <location>
        <position position="96"/>
    </location>
</feature>
<feature type="mutagenesis site" description="Loss of catalytic activity." evidence="3">
    <original>N</original>
    <variation>L</variation>
    <variation>V</variation>
    <location>
        <position position="125"/>
    </location>
</feature>
<feature type="mutagenesis site" description="Loss of catalytic activity." evidence="3">
    <original>V</original>
    <variation>G</variation>
    <location>
        <position position="127"/>
    </location>
</feature>
<reference key="1">
    <citation type="journal article" date="1995" name="DNA Res.">
        <title>Cloning and sequencing of a 23-kb region of the Bacillus subtilis genome between the iol and hut operons.</title>
        <authorList>
            <person name="Yoshida K."/>
            <person name="Fujimyra M."/>
            <person name="Yanai N."/>
            <person name="Fujita Y."/>
        </authorList>
    </citation>
    <scope>NUCLEOTIDE SEQUENCE [GENOMIC DNA]</scope>
    <source>
        <strain>168 / BGSC1A1</strain>
    </source>
</reference>
<reference key="2">
    <citation type="journal article" date="1997" name="Nature">
        <title>The complete genome sequence of the Gram-positive bacterium Bacillus subtilis.</title>
        <authorList>
            <person name="Kunst F."/>
            <person name="Ogasawara N."/>
            <person name="Moszer I."/>
            <person name="Albertini A.M."/>
            <person name="Alloni G."/>
            <person name="Azevedo V."/>
            <person name="Bertero M.G."/>
            <person name="Bessieres P."/>
            <person name="Bolotin A."/>
            <person name="Borchert S."/>
            <person name="Borriss R."/>
            <person name="Boursier L."/>
            <person name="Brans A."/>
            <person name="Braun M."/>
            <person name="Brignell S.C."/>
            <person name="Bron S."/>
            <person name="Brouillet S."/>
            <person name="Bruschi C.V."/>
            <person name="Caldwell B."/>
            <person name="Capuano V."/>
            <person name="Carter N.M."/>
            <person name="Choi S.-K."/>
            <person name="Codani J.-J."/>
            <person name="Connerton I.F."/>
            <person name="Cummings N.J."/>
            <person name="Daniel R.A."/>
            <person name="Denizot F."/>
            <person name="Devine K.M."/>
            <person name="Duesterhoeft A."/>
            <person name="Ehrlich S.D."/>
            <person name="Emmerson P.T."/>
            <person name="Entian K.-D."/>
            <person name="Errington J."/>
            <person name="Fabret C."/>
            <person name="Ferrari E."/>
            <person name="Foulger D."/>
            <person name="Fritz C."/>
            <person name="Fujita M."/>
            <person name="Fujita Y."/>
            <person name="Fuma S."/>
            <person name="Galizzi A."/>
            <person name="Galleron N."/>
            <person name="Ghim S.-Y."/>
            <person name="Glaser P."/>
            <person name="Goffeau A."/>
            <person name="Golightly E.J."/>
            <person name="Grandi G."/>
            <person name="Guiseppi G."/>
            <person name="Guy B.J."/>
            <person name="Haga K."/>
            <person name="Haiech J."/>
            <person name="Harwood C.R."/>
            <person name="Henaut A."/>
            <person name="Hilbert H."/>
            <person name="Holsappel S."/>
            <person name="Hosono S."/>
            <person name="Hullo M.-F."/>
            <person name="Itaya M."/>
            <person name="Jones L.-M."/>
            <person name="Joris B."/>
            <person name="Karamata D."/>
            <person name="Kasahara Y."/>
            <person name="Klaerr-Blanchard M."/>
            <person name="Klein C."/>
            <person name="Kobayashi Y."/>
            <person name="Koetter P."/>
            <person name="Koningstein G."/>
            <person name="Krogh S."/>
            <person name="Kumano M."/>
            <person name="Kurita K."/>
            <person name="Lapidus A."/>
            <person name="Lardinois S."/>
            <person name="Lauber J."/>
            <person name="Lazarevic V."/>
            <person name="Lee S.-M."/>
            <person name="Levine A."/>
            <person name="Liu H."/>
            <person name="Masuda S."/>
            <person name="Mauel C."/>
            <person name="Medigue C."/>
            <person name="Medina N."/>
            <person name="Mellado R.P."/>
            <person name="Mizuno M."/>
            <person name="Moestl D."/>
            <person name="Nakai S."/>
            <person name="Noback M."/>
            <person name="Noone D."/>
            <person name="O'Reilly M."/>
            <person name="Ogawa K."/>
            <person name="Ogiwara A."/>
            <person name="Oudega B."/>
            <person name="Park S.-H."/>
            <person name="Parro V."/>
            <person name="Pohl T.M."/>
            <person name="Portetelle D."/>
            <person name="Porwollik S."/>
            <person name="Prescott A.M."/>
            <person name="Presecan E."/>
            <person name="Pujic P."/>
            <person name="Purnelle B."/>
            <person name="Rapoport G."/>
            <person name="Rey M."/>
            <person name="Reynolds S."/>
            <person name="Rieger M."/>
            <person name="Rivolta C."/>
            <person name="Rocha E."/>
            <person name="Roche B."/>
            <person name="Rose M."/>
            <person name="Sadaie Y."/>
            <person name="Sato T."/>
            <person name="Scanlan E."/>
            <person name="Schleich S."/>
            <person name="Schroeter R."/>
            <person name="Scoffone F."/>
            <person name="Sekiguchi J."/>
            <person name="Sekowska A."/>
            <person name="Seror S.J."/>
            <person name="Serror P."/>
            <person name="Shin B.-S."/>
            <person name="Soldo B."/>
            <person name="Sorokin A."/>
            <person name="Tacconi E."/>
            <person name="Takagi T."/>
            <person name="Takahashi H."/>
            <person name="Takemaru K."/>
            <person name="Takeuchi M."/>
            <person name="Tamakoshi A."/>
            <person name="Tanaka T."/>
            <person name="Terpstra P."/>
            <person name="Tognoni A."/>
            <person name="Tosato V."/>
            <person name="Uchiyama S."/>
            <person name="Vandenbol M."/>
            <person name="Vannier F."/>
            <person name="Vassarotti A."/>
            <person name="Viari A."/>
            <person name="Wambutt R."/>
            <person name="Wedler E."/>
            <person name="Wedler H."/>
            <person name="Weitzenegger T."/>
            <person name="Winters P."/>
            <person name="Wipat A."/>
            <person name="Yamamoto H."/>
            <person name="Yamane K."/>
            <person name="Yasumoto K."/>
            <person name="Yata K."/>
            <person name="Yoshida K."/>
            <person name="Yoshikawa H.-F."/>
            <person name="Zumstein E."/>
            <person name="Yoshikawa H."/>
            <person name="Danchin A."/>
        </authorList>
    </citation>
    <scope>NUCLEOTIDE SEQUENCE [LARGE SCALE GENOMIC DNA]</scope>
    <source>
        <strain>168</strain>
    </source>
</reference>
<reference key="3">
    <citation type="journal article" date="2018" name="J. Biol. Chem.">
        <title>Identification of a metabolic disposal route for the oncometabolite S-(2-succino)cysteine in Bacillus subtilis.</title>
        <authorList>
            <person name="Niehaus T.D."/>
            <person name="Folz J."/>
            <person name="McCarty D.R."/>
            <person name="Cooper A.J.L."/>
            <person name="Moraga Amador D."/>
            <person name="Fiehn O."/>
            <person name="Hanson A.D."/>
        </authorList>
    </citation>
    <scope>FUNCTION</scope>
    <scope>DISRUPTION PHENOTYPE</scope>
    <scope>PATHWAY</scope>
    <source>
        <strain>168</strain>
    </source>
</reference>
<reference key="4">
    <citation type="journal article" date="2022" name="FEBS J.">
        <title>Bacterial flavoprotein monooxygenase YxeK salvages toxic S-(2-succino)-adducts via oxygenolytic C-S bond cleavage.</title>
        <authorList>
            <person name="Matthews A."/>
            <person name="Schoenfelder J."/>
            <person name="Lagies S."/>
            <person name="Schleicher E."/>
            <person name="Kammerer B."/>
            <person name="Ellis H.R."/>
            <person name="Stull F."/>
            <person name="Teufel R."/>
        </authorList>
    </citation>
    <scope>FUNCTION</scope>
    <scope>CATALYTIC ACTIVITY</scope>
    <scope>SUBSTRATE SPECIFICITY</scope>
    <scope>BIOPHYSICOCHEMICAL PROPERTIES</scope>
    <scope>SUBUNIT</scope>
    <scope>MUTAGENESIS OF HIS-19; ARG-74; THR-96; ASN-125 AND VAL-127</scope>
    <source>
        <strain>168</strain>
    </source>
</reference>
<accession>P54950</accession>
<organism>
    <name type="scientific">Bacillus subtilis (strain 168)</name>
    <dbReference type="NCBI Taxonomy" id="224308"/>
    <lineage>
        <taxon>Bacteria</taxon>
        <taxon>Bacillati</taxon>
        <taxon>Bacillota</taxon>
        <taxon>Bacilli</taxon>
        <taxon>Bacillales</taxon>
        <taxon>Bacillaceae</taxon>
        <taxon>Bacillus</taxon>
    </lineage>
</organism>
<keyword id="KW-0028">Amino-acid biosynthesis</keyword>
<keyword id="KW-0198">Cysteine biosynthesis</keyword>
<keyword id="KW-0285">Flavoprotein</keyword>
<keyword id="KW-0288">FMN</keyword>
<keyword id="KW-0503">Monooxygenase</keyword>
<keyword id="KW-0560">Oxidoreductase</keyword>
<keyword id="KW-1185">Reference proteome</keyword>
<dbReference type="EC" id="1.14.13.-" evidence="3"/>
<dbReference type="EMBL" id="D45912">
    <property type="protein sequence ID" value="BAA08327.1"/>
    <property type="molecule type" value="Genomic_DNA"/>
</dbReference>
<dbReference type="EMBL" id="AL009126">
    <property type="protein sequence ID" value="CAB15988.1"/>
    <property type="molecule type" value="Genomic_DNA"/>
</dbReference>
<dbReference type="PIR" id="E70075">
    <property type="entry name" value="E70075"/>
</dbReference>
<dbReference type="RefSeq" id="NP_391831.1">
    <property type="nucleotide sequence ID" value="NC_000964.3"/>
</dbReference>
<dbReference type="RefSeq" id="WP_003242500.1">
    <property type="nucleotide sequence ID" value="NZ_OZ025638.1"/>
</dbReference>
<dbReference type="SMR" id="P54950"/>
<dbReference type="FunCoup" id="P54950">
    <property type="interactions" value="116"/>
</dbReference>
<dbReference type="STRING" id="224308.BSU39520"/>
<dbReference type="PaxDb" id="224308-BSU39520"/>
<dbReference type="EnsemblBacteria" id="CAB15988">
    <property type="protein sequence ID" value="CAB15988"/>
    <property type="gene ID" value="BSU_39520"/>
</dbReference>
<dbReference type="GeneID" id="937570"/>
<dbReference type="KEGG" id="bsu:BSU39520"/>
<dbReference type="PATRIC" id="fig|224308.179.peg.4277"/>
<dbReference type="eggNOG" id="COG2141">
    <property type="taxonomic scope" value="Bacteria"/>
</dbReference>
<dbReference type="InParanoid" id="P54950"/>
<dbReference type="OrthoDB" id="3265338at2"/>
<dbReference type="PhylomeDB" id="P54950"/>
<dbReference type="BioCyc" id="BSUB:BSU39520-MONOMER"/>
<dbReference type="BioCyc" id="MetaCyc:BSU39520-MONOMER"/>
<dbReference type="UniPathway" id="UPA00136"/>
<dbReference type="Proteomes" id="UP000001570">
    <property type="component" value="Chromosome"/>
</dbReference>
<dbReference type="GO" id="GO:0004497">
    <property type="term" value="F:monooxygenase activity"/>
    <property type="evidence" value="ECO:0007669"/>
    <property type="project" value="UniProtKB-KW"/>
</dbReference>
<dbReference type="GO" id="GO:0016705">
    <property type="term" value="F:oxidoreductase activity, acting on paired donors, with incorporation or reduction of molecular oxygen"/>
    <property type="evidence" value="ECO:0007669"/>
    <property type="project" value="InterPro"/>
</dbReference>
<dbReference type="GO" id="GO:0019344">
    <property type="term" value="P:cysteine biosynthetic process"/>
    <property type="evidence" value="ECO:0007669"/>
    <property type="project" value="UniProtKB-UniPathway"/>
</dbReference>
<dbReference type="CDD" id="cd01095">
    <property type="entry name" value="Nitrilotriacetate_monoxgenase"/>
    <property type="match status" value="1"/>
</dbReference>
<dbReference type="Gene3D" id="3.20.20.30">
    <property type="entry name" value="Luciferase-like domain"/>
    <property type="match status" value="1"/>
</dbReference>
<dbReference type="InterPro" id="IPR051260">
    <property type="entry name" value="Diverse_substr_monoxygenases"/>
</dbReference>
<dbReference type="InterPro" id="IPR011251">
    <property type="entry name" value="Luciferase-like_dom"/>
</dbReference>
<dbReference type="InterPro" id="IPR036661">
    <property type="entry name" value="Luciferase-like_sf"/>
</dbReference>
<dbReference type="InterPro" id="IPR016215">
    <property type="entry name" value="NTA_MOA"/>
</dbReference>
<dbReference type="NCBIfam" id="TIGR03860">
    <property type="entry name" value="FMN_nitrolo"/>
    <property type="match status" value="1"/>
</dbReference>
<dbReference type="PANTHER" id="PTHR30011">
    <property type="entry name" value="ALKANESULFONATE MONOOXYGENASE-RELATED"/>
    <property type="match status" value="1"/>
</dbReference>
<dbReference type="PANTHER" id="PTHR30011:SF16">
    <property type="entry name" value="C2H2 FINGER DOMAIN TRANSCRIPTION FACTOR (EUROFUNG)-RELATED"/>
    <property type="match status" value="1"/>
</dbReference>
<dbReference type="Pfam" id="PF00296">
    <property type="entry name" value="Bac_luciferase"/>
    <property type="match status" value="1"/>
</dbReference>
<dbReference type="PIRSF" id="PIRSF000337">
    <property type="entry name" value="NTA_MOA"/>
    <property type="match status" value="1"/>
</dbReference>
<dbReference type="SUPFAM" id="SSF51679">
    <property type="entry name" value="Bacterial luciferase-like"/>
    <property type="match status" value="1"/>
</dbReference>
<proteinExistence type="evidence at protein level"/>
<protein>
    <recommendedName>
        <fullName evidence="7">N-acetyl-S-(2-succino)cysteine monooxygenase</fullName>
        <ecNumber evidence="3">1.14.13.-</ecNumber>
    </recommendedName>
    <alternativeName>
        <fullName evidence="4">S-(2-succino)cysteine metabolism operon protein K</fullName>
    </alternativeName>
</protein>
<gene>
    <name evidence="4" type="primary">scmK</name>
    <name evidence="5" type="synonym">yxeK</name>
    <name type="ordered locus">BSU39520</name>
    <name type="ORF">LP9C</name>
</gene>